<dbReference type="EC" id="6.1.1.17" evidence="1"/>
<dbReference type="EMBL" id="CP000724">
    <property type="protein sequence ID" value="ABR50575.1"/>
    <property type="molecule type" value="Genomic_DNA"/>
</dbReference>
<dbReference type="RefSeq" id="WP_012065466.1">
    <property type="nucleotide sequence ID" value="NC_009633.1"/>
</dbReference>
<dbReference type="SMR" id="A6TWK7"/>
<dbReference type="STRING" id="293826.Amet_4503"/>
<dbReference type="KEGG" id="amt:Amet_4503"/>
<dbReference type="eggNOG" id="COG0008">
    <property type="taxonomic scope" value="Bacteria"/>
</dbReference>
<dbReference type="eggNOG" id="COG1384">
    <property type="taxonomic scope" value="Bacteria"/>
</dbReference>
<dbReference type="HOGENOM" id="CLU_015768_6_1_9"/>
<dbReference type="OrthoDB" id="9807503at2"/>
<dbReference type="Proteomes" id="UP000001572">
    <property type="component" value="Chromosome"/>
</dbReference>
<dbReference type="GO" id="GO:0005737">
    <property type="term" value="C:cytoplasm"/>
    <property type="evidence" value="ECO:0007669"/>
    <property type="project" value="UniProtKB-SubCell"/>
</dbReference>
<dbReference type="GO" id="GO:0005524">
    <property type="term" value="F:ATP binding"/>
    <property type="evidence" value="ECO:0007669"/>
    <property type="project" value="UniProtKB-UniRule"/>
</dbReference>
<dbReference type="GO" id="GO:0004818">
    <property type="term" value="F:glutamate-tRNA ligase activity"/>
    <property type="evidence" value="ECO:0007669"/>
    <property type="project" value="UniProtKB-UniRule"/>
</dbReference>
<dbReference type="GO" id="GO:0000049">
    <property type="term" value="F:tRNA binding"/>
    <property type="evidence" value="ECO:0007669"/>
    <property type="project" value="InterPro"/>
</dbReference>
<dbReference type="GO" id="GO:0008270">
    <property type="term" value="F:zinc ion binding"/>
    <property type="evidence" value="ECO:0007669"/>
    <property type="project" value="UniProtKB-UniRule"/>
</dbReference>
<dbReference type="GO" id="GO:0006424">
    <property type="term" value="P:glutamyl-tRNA aminoacylation"/>
    <property type="evidence" value="ECO:0007669"/>
    <property type="project" value="UniProtKB-UniRule"/>
</dbReference>
<dbReference type="CDD" id="cd00808">
    <property type="entry name" value="GluRS_core"/>
    <property type="match status" value="1"/>
</dbReference>
<dbReference type="FunFam" id="1.10.10.350:FF:000002">
    <property type="entry name" value="Glutamate--tRNA ligase"/>
    <property type="match status" value="1"/>
</dbReference>
<dbReference type="FunFam" id="3.40.50.620:FF:000045">
    <property type="entry name" value="Glutamate--tRNA ligase, mitochondrial"/>
    <property type="match status" value="1"/>
</dbReference>
<dbReference type="Gene3D" id="1.10.10.350">
    <property type="match status" value="1"/>
</dbReference>
<dbReference type="Gene3D" id="1.10.8.70">
    <property type="entry name" value="Glutamate-tRNA synthetase, class I, anticodon-binding domain 1"/>
    <property type="match status" value="1"/>
</dbReference>
<dbReference type="Gene3D" id="3.40.50.620">
    <property type="entry name" value="HUPs"/>
    <property type="match status" value="1"/>
</dbReference>
<dbReference type="HAMAP" id="MF_00022">
    <property type="entry name" value="Glu_tRNA_synth_type1"/>
    <property type="match status" value="1"/>
</dbReference>
<dbReference type="InterPro" id="IPR045462">
    <property type="entry name" value="aa-tRNA-synth_I_cd-bd"/>
</dbReference>
<dbReference type="InterPro" id="IPR020751">
    <property type="entry name" value="aa-tRNA-synth_I_codon-bd_sub2"/>
</dbReference>
<dbReference type="InterPro" id="IPR008925">
    <property type="entry name" value="aa_tRNA-synth_I_cd-bd_sf"/>
</dbReference>
<dbReference type="InterPro" id="IPR004527">
    <property type="entry name" value="Glu-tRNA-ligase_bac/mito"/>
</dbReference>
<dbReference type="InterPro" id="IPR020752">
    <property type="entry name" value="Glu-tRNA-synth_I_codon-bd_sub1"/>
</dbReference>
<dbReference type="InterPro" id="IPR000924">
    <property type="entry name" value="Glu/Gln-tRNA-synth"/>
</dbReference>
<dbReference type="InterPro" id="IPR020058">
    <property type="entry name" value="Glu/Gln-tRNA-synth_Ib_cat-dom"/>
</dbReference>
<dbReference type="InterPro" id="IPR049940">
    <property type="entry name" value="GluQ/Sye"/>
</dbReference>
<dbReference type="InterPro" id="IPR033910">
    <property type="entry name" value="GluRS_core"/>
</dbReference>
<dbReference type="InterPro" id="IPR014729">
    <property type="entry name" value="Rossmann-like_a/b/a_fold"/>
</dbReference>
<dbReference type="NCBIfam" id="TIGR00464">
    <property type="entry name" value="gltX_bact"/>
    <property type="match status" value="1"/>
</dbReference>
<dbReference type="PANTHER" id="PTHR43311">
    <property type="entry name" value="GLUTAMATE--TRNA LIGASE"/>
    <property type="match status" value="1"/>
</dbReference>
<dbReference type="PANTHER" id="PTHR43311:SF2">
    <property type="entry name" value="GLUTAMATE--TRNA LIGASE, MITOCHONDRIAL-RELATED"/>
    <property type="match status" value="1"/>
</dbReference>
<dbReference type="Pfam" id="PF19269">
    <property type="entry name" value="Anticodon_2"/>
    <property type="match status" value="1"/>
</dbReference>
<dbReference type="Pfam" id="PF00749">
    <property type="entry name" value="tRNA-synt_1c"/>
    <property type="match status" value="1"/>
</dbReference>
<dbReference type="PRINTS" id="PR00987">
    <property type="entry name" value="TRNASYNTHGLU"/>
</dbReference>
<dbReference type="SUPFAM" id="SSF48163">
    <property type="entry name" value="An anticodon-binding domain of class I aminoacyl-tRNA synthetases"/>
    <property type="match status" value="1"/>
</dbReference>
<dbReference type="SUPFAM" id="SSF52374">
    <property type="entry name" value="Nucleotidylyl transferase"/>
    <property type="match status" value="1"/>
</dbReference>
<organism>
    <name type="scientific">Alkaliphilus metalliredigens (strain QYMF)</name>
    <dbReference type="NCBI Taxonomy" id="293826"/>
    <lineage>
        <taxon>Bacteria</taxon>
        <taxon>Bacillati</taxon>
        <taxon>Bacillota</taxon>
        <taxon>Clostridia</taxon>
        <taxon>Peptostreptococcales</taxon>
        <taxon>Natronincolaceae</taxon>
        <taxon>Alkaliphilus</taxon>
    </lineage>
</organism>
<gene>
    <name evidence="1" type="primary">gltX</name>
    <name type="ordered locus">Amet_4503</name>
</gene>
<evidence type="ECO:0000255" key="1">
    <source>
        <dbReference type="HAMAP-Rule" id="MF_00022"/>
    </source>
</evidence>
<keyword id="KW-0030">Aminoacyl-tRNA synthetase</keyword>
<keyword id="KW-0067">ATP-binding</keyword>
<keyword id="KW-0963">Cytoplasm</keyword>
<keyword id="KW-0436">Ligase</keyword>
<keyword id="KW-0479">Metal-binding</keyword>
<keyword id="KW-0547">Nucleotide-binding</keyword>
<keyword id="KW-0648">Protein biosynthesis</keyword>
<keyword id="KW-1185">Reference proteome</keyword>
<keyword id="KW-0862">Zinc</keyword>
<proteinExistence type="inferred from homology"/>
<accession>A6TWK7</accession>
<protein>
    <recommendedName>
        <fullName evidence="1">Glutamate--tRNA ligase</fullName>
        <ecNumber evidence="1">6.1.1.17</ecNumber>
    </recommendedName>
    <alternativeName>
        <fullName evidence="1">Glutamyl-tRNA synthetase</fullName>
        <shortName evidence="1">GluRS</shortName>
    </alternativeName>
</protein>
<name>SYE_ALKMQ</name>
<comment type="function">
    <text evidence="1">Catalyzes the attachment of glutamate to tRNA(Glu) in a two-step reaction: glutamate is first activated by ATP to form Glu-AMP and then transferred to the acceptor end of tRNA(Glu).</text>
</comment>
<comment type="catalytic activity">
    <reaction evidence="1">
        <text>tRNA(Glu) + L-glutamate + ATP = L-glutamyl-tRNA(Glu) + AMP + diphosphate</text>
        <dbReference type="Rhea" id="RHEA:23540"/>
        <dbReference type="Rhea" id="RHEA-COMP:9663"/>
        <dbReference type="Rhea" id="RHEA-COMP:9680"/>
        <dbReference type="ChEBI" id="CHEBI:29985"/>
        <dbReference type="ChEBI" id="CHEBI:30616"/>
        <dbReference type="ChEBI" id="CHEBI:33019"/>
        <dbReference type="ChEBI" id="CHEBI:78442"/>
        <dbReference type="ChEBI" id="CHEBI:78520"/>
        <dbReference type="ChEBI" id="CHEBI:456215"/>
        <dbReference type="EC" id="6.1.1.17"/>
    </reaction>
</comment>
<comment type="cofactor">
    <cofactor evidence="1">
        <name>Zn(2+)</name>
        <dbReference type="ChEBI" id="CHEBI:29105"/>
    </cofactor>
    <text evidence="1">Binds 1 zinc ion per subunit.</text>
</comment>
<comment type="subunit">
    <text evidence="1">Monomer.</text>
</comment>
<comment type="subcellular location">
    <subcellularLocation>
        <location evidence="1">Cytoplasm</location>
    </subcellularLocation>
</comment>
<comment type="similarity">
    <text evidence="1">Belongs to the class-I aminoacyl-tRNA synthetase family. Glutamate--tRNA ligase type 1 subfamily.</text>
</comment>
<reference key="1">
    <citation type="journal article" date="2016" name="Genome Announc.">
        <title>Complete genome sequence of Alkaliphilus metalliredigens strain QYMF, an alkaliphilic and metal-reducing bacterium isolated from borax-contaminated leachate ponds.</title>
        <authorList>
            <person name="Hwang C."/>
            <person name="Copeland A."/>
            <person name="Lucas S."/>
            <person name="Lapidus A."/>
            <person name="Barry K."/>
            <person name="Detter J.C."/>
            <person name="Glavina Del Rio T."/>
            <person name="Hammon N."/>
            <person name="Israni S."/>
            <person name="Dalin E."/>
            <person name="Tice H."/>
            <person name="Pitluck S."/>
            <person name="Chertkov O."/>
            <person name="Brettin T."/>
            <person name="Bruce D."/>
            <person name="Han C."/>
            <person name="Schmutz J."/>
            <person name="Larimer F."/>
            <person name="Land M.L."/>
            <person name="Hauser L."/>
            <person name="Kyrpides N."/>
            <person name="Mikhailova N."/>
            <person name="Ye Q."/>
            <person name="Zhou J."/>
            <person name="Richardson P."/>
            <person name="Fields M.W."/>
        </authorList>
    </citation>
    <scope>NUCLEOTIDE SEQUENCE [LARGE SCALE GENOMIC DNA]</scope>
    <source>
        <strain>QYMF</strain>
    </source>
</reference>
<feature type="chain" id="PRO_0000330950" description="Glutamate--tRNA ligase">
    <location>
        <begin position="1"/>
        <end position="493"/>
    </location>
</feature>
<feature type="short sequence motif" description="'HIGH' region" evidence="1">
    <location>
        <begin position="10"/>
        <end position="20"/>
    </location>
</feature>
<feature type="short sequence motif" description="'KMSKS' region" evidence="1">
    <location>
        <begin position="258"/>
        <end position="262"/>
    </location>
</feature>
<feature type="binding site" evidence="1">
    <location>
        <position position="114"/>
    </location>
    <ligand>
        <name>Zn(2+)</name>
        <dbReference type="ChEBI" id="CHEBI:29105"/>
    </ligand>
</feature>
<feature type="binding site" evidence="1">
    <location>
        <position position="116"/>
    </location>
    <ligand>
        <name>Zn(2+)</name>
        <dbReference type="ChEBI" id="CHEBI:29105"/>
    </ligand>
</feature>
<feature type="binding site" evidence="1">
    <location>
        <position position="141"/>
    </location>
    <ligand>
        <name>Zn(2+)</name>
        <dbReference type="ChEBI" id="CHEBI:29105"/>
    </ligand>
</feature>
<feature type="binding site" evidence="1">
    <location>
        <position position="143"/>
    </location>
    <ligand>
        <name>Zn(2+)</name>
        <dbReference type="ChEBI" id="CHEBI:29105"/>
    </ligand>
</feature>
<feature type="binding site" evidence="1">
    <location>
        <position position="261"/>
    </location>
    <ligand>
        <name>ATP</name>
        <dbReference type="ChEBI" id="CHEBI:30616"/>
    </ligand>
</feature>
<sequence length="493" mass="56565">MESVRVRFAPSPTGFVHIGSLRTALYNYLFARKNQGKYILRVEDTDQSRFVEGAIEGMLKSMDWAGVSHNEGVVLEEETLKQQGQYGPYIQSERLPIYQEHITKLLEEGHAYHCFCSKERLDEVREKQKAAGETAKYDGHCRENPKEMVREKIEAGESYVIRLKLPENRDIEFNDIVRGKVTMNTGDLDDQVLIKSDGFPTYHFAVVVDDHLMEITHVIRGEEWLPSTPKHVYLYEVMGWQAPQYVHLPNILNTERKKLSKRQGDVAVGDFMRKGYLPEALVNYIALVGWSPEDNQEIFSMTELEENFSLERVSKSGGVFDVNKLNWINNHYIKESTADRIVDLAIPYLIEAGYVTEAEVGKKYDWLKDLVGVLKERLDYVADIVNHVDIFFKTAIEPKSDEAREILKEAHLPELLEAFLEKVEAAEVIDDAFGKKALKEIQKEKGFKGPKLFKPIRVALTGEEHGPDLPLIIKVLGKENLKSRIQYVKEHLI</sequence>